<organism>
    <name type="scientific">Aspergillus clavatus (strain ATCC 1007 / CBS 513.65 / DSM 816 / NCTC 3887 / NRRL 1 / QM 1276 / 107)</name>
    <dbReference type="NCBI Taxonomy" id="344612"/>
    <lineage>
        <taxon>Eukaryota</taxon>
        <taxon>Fungi</taxon>
        <taxon>Dikarya</taxon>
        <taxon>Ascomycota</taxon>
        <taxon>Pezizomycotina</taxon>
        <taxon>Eurotiomycetes</taxon>
        <taxon>Eurotiomycetidae</taxon>
        <taxon>Eurotiales</taxon>
        <taxon>Aspergillaceae</taxon>
        <taxon>Aspergillus</taxon>
        <taxon>Aspergillus subgen. Fumigati</taxon>
    </lineage>
</organism>
<gene>
    <name type="primary">dpp5</name>
    <name type="ORF">ACLA_080850</name>
</gene>
<comment type="function">
    <text evidence="1">Extracellular dipeptidyl-peptidase which removes N-terminal dipeptides sequentially from polypeptides having unsubstituted N-termini.</text>
</comment>
<comment type="subcellular location">
    <subcellularLocation>
        <location evidence="1">Secreted</location>
    </subcellularLocation>
</comment>
<comment type="similarity">
    <text evidence="3">Belongs to the peptidase S9C family.</text>
</comment>
<evidence type="ECO:0000250" key="1"/>
<evidence type="ECO:0000255" key="2"/>
<evidence type="ECO:0000305" key="3"/>
<protein>
    <recommendedName>
        <fullName>Probable dipeptidyl-peptidase 5</fullName>
        <ecNumber>3.4.14.-</ecNumber>
    </recommendedName>
    <alternativeName>
        <fullName>Dipeptidyl-peptidase V</fullName>
        <shortName>DPP V</shortName>
        <shortName>DppV</shortName>
    </alternativeName>
</protein>
<dbReference type="EC" id="3.4.14.-"/>
<dbReference type="EMBL" id="DS027060">
    <property type="protein sequence ID" value="EAW06401.1"/>
    <property type="molecule type" value="Genomic_DNA"/>
</dbReference>
<dbReference type="RefSeq" id="XP_001267827.1">
    <property type="nucleotide sequence ID" value="XM_001267826.1"/>
</dbReference>
<dbReference type="SMR" id="A1CSW4"/>
<dbReference type="STRING" id="344612.A1CSW4"/>
<dbReference type="ESTHER" id="aspcl-dpp5">
    <property type="family name" value="Prolyl_oligopeptidase_S9"/>
</dbReference>
<dbReference type="MEROPS" id="S09.012"/>
<dbReference type="GlyCosmos" id="A1CSW4">
    <property type="glycosylation" value="7 sites, No reported glycans"/>
</dbReference>
<dbReference type="EnsemblFungi" id="EAW06401">
    <property type="protein sequence ID" value="EAW06401"/>
    <property type="gene ID" value="ACLA_080850"/>
</dbReference>
<dbReference type="GeneID" id="4700146"/>
<dbReference type="KEGG" id="act:ACLA_080850"/>
<dbReference type="VEuPathDB" id="FungiDB:ACLA_080850"/>
<dbReference type="eggNOG" id="KOG2100">
    <property type="taxonomic scope" value="Eukaryota"/>
</dbReference>
<dbReference type="HOGENOM" id="CLU_008615_0_1_1"/>
<dbReference type="OMA" id="YPVRYWD"/>
<dbReference type="OrthoDB" id="416344at2759"/>
<dbReference type="Proteomes" id="UP000006701">
    <property type="component" value="Unassembled WGS sequence"/>
</dbReference>
<dbReference type="GO" id="GO:0005576">
    <property type="term" value="C:extracellular region"/>
    <property type="evidence" value="ECO:0007669"/>
    <property type="project" value="UniProtKB-SubCell"/>
</dbReference>
<dbReference type="GO" id="GO:0004177">
    <property type="term" value="F:aminopeptidase activity"/>
    <property type="evidence" value="ECO:0007669"/>
    <property type="project" value="UniProtKB-KW"/>
</dbReference>
<dbReference type="GO" id="GO:0004252">
    <property type="term" value="F:serine-type endopeptidase activity"/>
    <property type="evidence" value="ECO:0007669"/>
    <property type="project" value="TreeGrafter"/>
</dbReference>
<dbReference type="GO" id="GO:0006508">
    <property type="term" value="P:proteolysis"/>
    <property type="evidence" value="ECO:0007669"/>
    <property type="project" value="UniProtKB-KW"/>
</dbReference>
<dbReference type="FunFam" id="2.120.10.30:FF:000109">
    <property type="entry name" value="Dipeptidyl-peptidase 5"/>
    <property type="match status" value="1"/>
</dbReference>
<dbReference type="FunFam" id="3.40.50.1820:FF:000028">
    <property type="entry name" value="S9 family peptidase"/>
    <property type="match status" value="1"/>
</dbReference>
<dbReference type="Gene3D" id="3.40.50.1820">
    <property type="entry name" value="alpha/beta hydrolase"/>
    <property type="match status" value="1"/>
</dbReference>
<dbReference type="Gene3D" id="2.120.10.30">
    <property type="entry name" value="TolB, C-terminal domain"/>
    <property type="match status" value="1"/>
</dbReference>
<dbReference type="InterPro" id="IPR011042">
    <property type="entry name" value="6-blade_b-propeller_TolB-like"/>
</dbReference>
<dbReference type="InterPro" id="IPR029058">
    <property type="entry name" value="AB_hydrolase_fold"/>
</dbReference>
<dbReference type="InterPro" id="IPR001375">
    <property type="entry name" value="Peptidase_S9_cat"/>
</dbReference>
<dbReference type="PANTHER" id="PTHR42776:SF11">
    <property type="entry name" value="DIPEPTIDYL-PEPTIDASE 5-RELATED"/>
    <property type="match status" value="1"/>
</dbReference>
<dbReference type="PANTHER" id="PTHR42776">
    <property type="entry name" value="SERINE PEPTIDASE S9 FAMILY MEMBER"/>
    <property type="match status" value="1"/>
</dbReference>
<dbReference type="Pfam" id="PF00326">
    <property type="entry name" value="Peptidase_S9"/>
    <property type="match status" value="1"/>
</dbReference>
<dbReference type="SUPFAM" id="SSF53474">
    <property type="entry name" value="alpha/beta-Hydrolases"/>
    <property type="match status" value="1"/>
</dbReference>
<dbReference type="SUPFAM" id="SSF82171">
    <property type="entry name" value="DPP6 N-terminal domain-like"/>
    <property type="match status" value="1"/>
</dbReference>
<name>DPP5_ASPCL</name>
<feature type="signal peptide" evidence="2">
    <location>
        <begin position="1"/>
        <end position="19"/>
    </location>
</feature>
<feature type="chain" id="PRO_0000397817" description="Probable dipeptidyl-peptidase 5">
    <location>
        <begin position="20"/>
        <end position="724"/>
    </location>
</feature>
<feature type="active site" description="Charge relay system" evidence="1">
    <location>
        <position position="563"/>
    </location>
</feature>
<feature type="active site" description="Charge relay system" evidence="1">
    <location>
        <position position="646"/>
    </location>
</feature>
<feature type="active site" description="Charge relay system" evidence="1">
    <location>
        <position position="678"/>
    </location>
</feature>
<feature type="glycosylation site" description="N-linked (GlcNAc...) asparagine" evidence="2">
    <location>
        <position position="76"/>
    </location>
</feature>
<feature type="glycosylation site" description="N-linked (GlcNAc...) asparagine" evidence="2">
    <location>
        <position position="97"/>
    </location>
</feature>
<feature type="glycosylation site" description="N-linked (GlcNAc...) asparagine" evidence="2">
    <location>
        <position position="154"/>
    </location>
</feature>
<feature type="glycosylation site" description="N-linked (GlcNAc...) asparagine" evidence="2">
    <location>
        <position position="257"/>
    </location>
</feature>
<feature type="glycosylation site" description="N-linked (GlcNAc...) asparagine" evidence="2">
    <location>
        <position position="383"/>
    </location>
</feature>
<feature type="glycosylation site" description="N-linked (GlcNAc...) asparagine" evidence="2">
    <location>
        <position position="453"/>
    </location>
</feature>
<feature type="glycosylation site" description="N-linked (GlcNAc...) asparagine" evidence="2">
    <location>
        <position position="610"/>
    </location>
</feature>
<reference key="1">
    <citation type="journal article" date="2008" name="PLoS Genet.">
        <title>Genomic islands in the pathogenic filamentous fungus Aspergillus fumigatus.</title>
        <authorList>
            <person name="Fedorova N.D."/>
            <person name="Khaldi N."/>
            <person name="Joardar V.S."/>
            <person name="Maiti R."/>
            <person name="Amedeo P."/>
            <person name="Anderson M.J."/>
            <person name="Crabtree J."/>
            <person name="Silva J.C."/>
            <person name="Badger J.H."/>
            <person name="Albarraq A."/>
            <person name="Angiuoli S."/>
            <person name="Bussey H."/>
            <person name="Bowyer P."/>
            <person name="Cotty P.J."/>
            <person name="Dyer P.S."/>
            <person name="Egan A."/>
            <person name="Galens K."/>
            <person name="Fraser-Liggett C.M."/>
            <person name="Haas B.J."/>
            <person name="Inman J.M."/>
            <person name="Kent R."/>
            <person name="Lemieux S."/>
            <person name="Malavazi I."/>
            <person name="Orvis J."/>
            <person name="Roemer T."/>
            <person name="Ronning C.M."/>
            <person name="Sundaram J.P."/>
            <person name="Sutton G."/>
            <person name="Turner G."/>
            <person name="Venter J.C."/>
            <person name="White O.R."/>
            <person name="Whitty B.R."/>
            <person name="Youngman P."/>
            <person name="Wolfe K.H."/>
            <person name="Goldman G.H."/>
            <person name="Wortman J.R."/>
            <person name="Jiang B."/>
            <person name="Denning D.W."/>
            <person name="Nierman W.C."/>
        </authorList>
    </citation>
    <scope>NUCLEOTIDE SEQUENCE [LARGE SCALE GENOMIC DNA]</scope>
    <source>
        <strain>ATCC 1007 / CBS 513.65 / DSM 816 / NCTC 3887 / NRRL 1 / QM 1276 / 107</strain>
    </source>
</reference>
<accession>A1CSW4</accession>
<proteinExistence type="inferred from homology"/>
<keyword id="KW-0031">Aminopeptidase</keyword>
<keyword id="KW-0325">Glycoprotein</keyword>
<keyword id="KW-0378">Hydrolase</keyword>
<keyword id="KW-0645">Protease</keyword>
<keyword id="KW-1185">Reference proteome</keyword>
<keyword id="KW-0964">Secreted</keyword>
<keyword id="KW-0720">Serine protease</keyword>
<keyword id="KW-0732">Signal</keyword>
<sequence>MGALTWLSVVAAAASTALAMTPEKMISAPRRSEVIPNPSGEIGVFSTSQYSFEKHKRSSWWSLLDLKTGQSKILTNDSSVSEILWLGTDDSTLLYVNGTNADVPGGVELWVTQVSSFTNGYKAASLPAAFSGFKTVTTKSGDIRFVAYAQSYANGTAYNEELVEKPLSSARIYDSIYVRHWDSYLTTTFNAVFSGTLKKGNNKKGYTLDGAVKNLVSPVRNAESPYPPFGGASDYDLSPNGKWVAFKSKAPELPKANFTTAYIYLVPHDGSEKAFAINGPDSPGTPKGIKGDANSPVFSPNSEKLAYLQMKDETYEADRRVLYVYSIGSKKTIPSVAGNWDRSPDSIKWTPDGKTLIVGSEDKGRSRLFAIPATARDDFKPKNFTDGGAVSAYYFLPDRSLLVTGTAIWTNWNVYTASPAKGVIKTLASANEIDPELKGLGPSDVSEIYFKGNWTDIHAWVVYPENFDKSKKYPLAFLIHGGPQGSWADSWSSRWNPKTFADQGYVVVAPNPTGSTGFGQKLTDEIQNNWGGAPYDDLVKCWEYVNKNLPFVDTEHGIAAGASYGGFMVNWIQGNDLGRRFKALVSHDGTFVADAKISTDELWFMQREFNGTFWDARDNYRRFDPSAPEHIRQFGTPQLVIHNDKDYRLAVAEGLSLFNVLQERGVPSRFLNFPDENHWVVNPENSLVWHQQVLGWINKYSGIEKSNPGAVSLDDTIVPVVNYN</sequence>